<comment type="function">
    <text evidence="1">ATP-dependent carboxylate-amine ligase which exhibits weak glutamate--cysteine ligase activity.</text>
</comment>
<comment type="catalytic activity">
    <reaction evidence="1">
        <text>L-cysteine + L-glutamate + ATP = gamma-L-glutamyl-L-cysteine + ADP + phosphate + H(+)</text>
        <dbReference type="Rhea" id="RHEA:13285"/>
        <dbReference type="ChEBI" id="CHEBI:15378"/>
        <dbReference type="ChEBI" id="CHEBI:29985"/>
        <dbReference type="ChEBI" id="CHEBI:30616"/>
        <dbReference type="ChEBI" id="CHEBI:35235"/>
        <dbReference type="ChEBI" id="CHEBI:43474"/>
        <dbReference type="ChEBI" id="CHEBI:58173"/>
        <dbReference type="ChEBI" id="CHEBI:456216"/>
        <dbReference type="EC" id="6.3.2.2"/>
    </reaction>
</comment>
<comment type="similarity">
    <text evidence="1">Belongs to the glutamate--cysteine ligase type 2 family. YbdK subfamily.</text>
</comment>
<comment type="sequence caution" evidence="2">
    <conflict type="erroneous initiation">
        <sequence resource="EMBL-CDS" id="CAQ00874"/>
    </conflict>
</comment>
<keyword id="KW-0067">ATP-binding</keyword>
<keyword id="KW-0436">Ligase</keyword>
<keyword id="KW-0547">Nucleotide-binding</keyword>
<reference key="1">
    <citation type="journal article" date="2008" name="J. Bacteriol.">
        <title>Genome of the actinomycete plant pathogen Clavibacter michiganensis subsp. sepedonicus suggests recent niche adaptation.</title>
        <authorList>
            <person name="Bentley S.D."/>
            <person name="Corton C."/>
            <person name="Brown S.E."/>
            <person name="Barron A."/>
            <person name="Clark L."/>
            <person name="Doggett J."/>
            <person name="Harris B."/>
            <person name="Ormond D."/>
            <person name="Quail M.A."/>
            <person name="May G."/>
            <person name="Francis D."/>
            <person name="Knudson D."/>
            <person name="Parkhill J."/>
            <person name="Ishimaru C.A."/>
        </authorList>
    </citation>
    <scope>NUCLEOTIDE SEQUENCE [LARGE SCALE GENOMIC DNA]</scope>
    <source>
        <strain>ATCC 33113 / DSM 20744 / JCM 9667 / LMG 2889 / ICMP 2535 / C-1</strain>
    </source>
</reference>
<evidence type="ECO:0000255" key="1">
    <source>
        <dbReference type="HAMAP-Rule" id="MF_01609"/>
    </source>
</evidence>
<evidence type="ECO:0000305" key="2"/>
<accession>B0REM7</accession>
<gene>
    <name type="ordered locus">CMS0754</name>
</gene>
<protein>
    <recommendedName>
        <fullName evidence="1">Putative glutamate--cysteine ligase 2</fullName>
        <ecNumber evidence="1">6.3.2.2</ecNumber>
    </recommendedName>
    <alternativeName>
        <fullName evidence="1">Gamma-glutamylcysteine synthetase 2</fullName>
        <shortName evidence="1">GCS 2</shortName>
        <shortName evidence="1">Gamma-GCS 2</shortName>
    </alternativeName>
</protein>
<sequence>MDGRTRMQIDFARQPPSRVGIEWELACVDRGSGELAGVAPQILRSFPHDDAHPHVTGEFLTNTVEVVSAPHSRVGHAVDDLARLIERVVDVADPLGIDLMCAGTHPFSAWPDQDVTPDNERYATLLDRTRWWGRQMMIWGVHVHVGIEDGSKALPILNALLVHLPRFQALSASSPFWSGQETGYASNRALMFQQLPTAGLPPDLTTWADYERLIGDMTHVGVIDHHSELRWDIRPAPKWGTLETRVFDGVSTLGEIASLAALVQCLVHDLSAALDRGEELPRMQPWFVRENKWRAARYGMDAIIIQDAAGEEALVGDDTRALVERLSPTADALGCEAELRGILDIVDRGASYQRQLRVAEENDGALAPVVTHLVEELRSGLGR</sequence>
<feature type="chain" id="PRO_0000337698" description="Putative glutamate--cysteine ligase 2">
    <location>
        <begin position="1"/>
        <end position="383"/>
    </location>
</feature>
<organism>
    <name type="scientific">Clavibacter sepedonicus</name>
    <name type="common">Clavibacter michiganensis subsp. sepedonicus</name>
    <dbReference type="NCBI Taxonomy" id="31964"/>
    <lineage>
        <taxon>Bacteria</taxon>
        <taxon>Bacillati</taxon>
        <taxon>Actinomycetota</taxon>
        <taxon>Actinomycetes</taxon>
        <taxon>Micrococcales</taxon>
        <taxon>Microbacteriaceae</taxon>
        <taxon>Clavibacter</taxon>
    </lineage>
</organism>
<name>GCS2_CLASE</name>
<dbReference type="EC" id="6.3.2.2" evidence="1"/>
<dbReference type="EMBL" id="AM849034">
    <property type="protein sequence ID" value="CAQ00874.1"/>
    <property type="status" value="ALT_INIT"/>
    <property type="molecule type" value="Genomic_DNA"/>
</dbReference>
<dbReference type="SMR" id="B0REM7"/>
<dbReference type="STRING" id="31964.CMS0754"/>
<dbReference type="KEGG" id="cms:CMS0754"/>
<dbReference type="eggNOG" id="COG2170">
    <property type="taxonomic scope" value="Bacteria"/>
</dbReference>
<dbReference type="HOGENOM" id="CLU_044848_1_0_11"/>
<dbReference type="OrthoDB" id="9769628at2"/>
<dbReference type="Proteomes" id="UP000001318">
    <property type="component" value="Chromosome"/>
</dbReference>
<dbReference type="GO" id="GO:0005524">
    <property type="term" value="F:ATP binding"/>
    <property type="evidence" value="ECO:0007669"/>
    <property type="project" value="UniProtKB-KW"/>
</dbReference>
<dbReference type="GO" id="GO:0004357">
    <property type="term" value="F:glutamate-cysteine ligase activity"/>
    <property type="evidence" value="ECO:0007669"/>
    <property type="project" value="UniProtKB-EC"/>
</dbReference>
<dbReference type="GO" id="GO:0042398">
    <property type="term" value="P:modified amino acid biosynthetic process"/>
    <property type="evidence" value="ECO:0007669"/>
    <property type="project" value="InterPro"/>
</dbReference>
<dbReference type="Gene3D" id="3.30.590.20">
    <property type="match status" value="1"/>
</dbReference>
<dbReference type="HAMAP" id="MF_01609">
    <property type="entry name" value="Glu_cys_ligase_2"/>
    <property type="match status" value="1"/>
</dbReference>
<dbReference type="InterPro" id="IPR050141">
    <property type="entry name" value="GCL_type2/YbdK_subfam"/>
</dbReference>
<dbReference type="InterPro" id="IPR006336">
    <property type="entry name" value="GCS2"/>
</dbReference>
<dbReference type="InterPro" id="IPR014746">
    <property type="entry name" value="Gln_synth/guanido_kin_cat_dom"/>
</dbReference>
<dbReference type="InterPro" id="IPR011793">
    <property type="entry name" value="YbdK"/>
</dbReference>
<dbReference type="NCBIfam" id="TIGR02050">
    <property type="entry name" value="gshA_cyan_rel"/>
    <property type="match status" value="1"/>
</dbReference>
<dbReference type="NCBIfam" id="NF010042">
    <property type="entry name" value="PRK13517.1-2"/>
    <property type="match status" value="1"/>
</dbReference>
<dbReference type="NCBIfam" id="NF010043">
    <property type="entry name" value="PRK13517.1-3"/>
    <property type="match status" value="1"/>
</dbReference>
<dbReference type="NCBIfam" id="NF010044">
    <property type="entry name" value="PRK13517.1-4"/>
    <property type="match status" value="1"/>
</dbReference>
<dbReference type="PANTHER" id="PTHR36510">
    <property type="entry name" value="GLUTAMATE--CYSTEINE LIGASE 2-RELATED"/>
    <property type="match status" value="1"/>
</dbReference>
<dbReference type="PANTHER" id="PTHR36510:SF1">
    <property type="entry name" value="GLUTAMATE--CYSTEINE LIGASE 2-RELATED"/>
    <property type="match status" value="1"/>
</dbReference>
<dbReference type="Pfam" id="PF04107">
    <property type="entry name" value="GCS2"/>
    <property type="match status" value="1"/>
</dbReference>
<dbReference type="SUPFAM" id="SSF55931">
    <property type="entry name" value="Glutamine synthetase/guanido kinase"/>
    <property type="match status" value="1"/>
</dbReference>
<proteinExistence type="inferred from homology"/>